<evidence type="ECO:0000255" key="1">
    <source>
        <dbReference type="HAMAP-Rule" id="MF_00679"/>
    </source>
</evidence>
<feature type="chain" id="PRO_1000044878" description="Chaperone protein HscA homolog">
    <location>
        <begin position="1"/>
        <end position="621"/>
    </location>
</feature>
<accession>Q0KCG7</accession>
<proteinExistence type="inferred from homology"/>
<name>HSCA_CUPNH</name>
<gene>
    <name evidence="1" type="primary">hscA</name>
    <name type="ordered locus">H16_A1163</name>
</gene>
<comment type="function">
    <text evidence="1">Chaperone involved in the maturation of iron-sulfur cluster-containing proteins. Has a low intrinsic ATPase activity which is markedly stimulated by HscB.</text>
</comment>
<comment type="similarity">
    <text evidence="1">Belongs to the heat shock protein 70 family.</text>
</comment>
<reference key="1">
    <citation type="journal article" date="2006" name="Nat. Biotechnol.">
        <title>Genome sequence of the bioplastic-producing 'Knallgas' bacterium Ralstonia eutropha H16.</title>
        <authorList>
            <person name="Pohlmann A."/>
            <person name="Fricke W.F."/>
            <person name="Reinecke F."/>
            <person name="Kusian B."/>
            <person name="Liesegang H."/>
            <person name="Cramm R."/>
            <person name="Eitinger T."/>
            <person name="Ewering C."/>
            <person name="Poetter M."/>
            <person name="Schwartz E."/>
            <person name="Strittmatter A."/>
            <person name="Voss I."/>
            <person name="Gottschalk G."/>
            <person name="Steinbuechel A."/>
            <person name="Friedrich B."/>
            <person name="Bowien B."/>
        </authorList>
    </citation>
    <scope>NUCLEOTIDE SEQUENCE [LARGE SCALE GENOMIC DNA]</scope>
    <source>
        <strain>ATCC 17699 / DSM 428 / KCTC 22496 / NCIMB 10442 / H16 / Stanier 337</strain>
    </source>
</reference>
<sequence>MALLQISEPGMSPAPHQRRLAVGIDLGTTNSLVAAVRSSIPEVLGDERGRALLPSVVRYLPDRTAHIGYRAQEEAVRDPKNTIVSVKRFMGRGLRDVANIEHSPYDFVDAPGMLQIKTAAGVKSPVEISAEILATLRQRAEDTLGDDLVGAVITVPAYFDEAQRQATKDAARLAGLEVLRLLNEPTAAAIAYGLDNASEGIYAVYDLGGGTFDISVLKLTQGVFEVLATGGDSALGGDDFDQRLLCWIVEQASLQPLSAQDMRLLMVRARAAKEALSESDSTVIDAVLESGEIVHLTLTVEIFDQVTAHLVQKTLAPVRKALRDAGVAPDEVKGVVLVGGATRMPSIRKAVGDYFGQTPLTNLDPDRVVALGAAMQANLLAGNHAPGEDWLLLDVIPLSLGVETMGGLVEKIIPRNSTIPVARAQEFTTFKDGQTAMAIHVLQGERELASDCRSLARFELRGIPPMVAGAARIRVTYQVDADGLLSVTARETHSGVEASVTVKPSYGLADDDIARMLQESFREAEHDMKSRALAEERVEADRLVEATQRALETDGDLLSAEERTAVEALMATVREIATGEDHHAIHAAVEKLSHGTDEFAARRMDRSIKSALAGRKVQELG</sequence>
<dbReference type="EMBL" id="AM260479">
    <property type="protein sequence ID" value="CAJ92304.1"/>
    <property type="molecule type" value="Genomic_DNA"/>
</dbReference>
<dbReference type="RefSeq" id="WP_010809021.1">
    <property type="nucleotide sequence ID" value="NZ_CP039287.1"/>
</dbReference>
<dbReference type="SMR" id="Q0KCG7"/>
<dbReference type="STRING" id="381666.H16_A1163"/>
<dbReference type="KEGG" id="reh:H16_A1163"/>
<dbReference type="eggNOG" id="COG0443">
    <property type="taxonomic scope" value="Bacteria"/>
</dbReference>
<dbReference type="HOGENOM" id="CLU_005965_2_1_4"/>
<dbReference type="OrthoDB" id="9766019at2"/>
<dbReference type="Proteomes" id="UP000008210">
    <property type="component" value="Chromosome 1"/>
</dbReference>
<dbReference type="GO" id="GO:0005524">
    <property type="term" value="F:ATP binding"/>
    <property type="evidence" value="ECO:0007669"/>
    <property type="project" value="UniProtKB-KW"/>
</dbReference>
<dbReference type="GO" id="GO:0016887">
    <property type="term" value="F:ATP hydrolysis activity"/>
    <property type="evidence" value="ECO:0007669"/>
    <property type="project" value="UniProtKB-UniRule"/>
</dbReference>
<dbReference type="GO" id="GO:0140662">
    <property type="term" value="F:ATP-dependent protein folding chaperone"/>
    <property type="evidence" value="ECO:0007669"/>
    <property type="project" value="InterPro"/>
</dbReference>
<dbReference type="GO" id="GO:0051082">
    <property type="term" value="F:unfolded protein binding"/>
    <property type="evidence" value="ECO:0007669"/>
    <property type="project" value="InterPro"/>
</dbReference>
<dbReference type="GO" id="GO:0016226">
    <property type="term" value="P:iron-sulfur cluster assembly"/>
    <property type="evidence" value="ECO:0007669"/>
    <property type="project" value="InterPro"/>
</dbReference>
<dbReference type="CDD" id="cd10236">
    <property type="entry name" value="ASKHA_NBD_HSP70_HscA"/>
    <property type="match status" value="1"/>
</dbReference>
<dbReference type="FunFam" id="3.30.420.40:FF:000046">
    <property type="entry name" value="Chaperone protein HscA"/>
    <property type="match status" value="1"/>
</dbReference>
<dbReference type="FunFam" id="2.60.34.10:FF:000005">
    <property type="entry name" value="Chaperone protein HscA homolog"/>
    <property type="match status" value="1"/>
</dbReference>
<dbReference type="Gene3D" id="1.20.1270.10">
    <property type="match status" value="1"/>
</dbReference>
<dbReference type="Gene3D" id="3.30.420.40">
    <property type="match status" value="2"/>
</dbReference>
<dbReference type="Gene3D" id="3.90.640.10">
    <property type="entry name" value="Actin, Chain A, domain 4"/>
    <property type="match status" value="1"/>
</dbReference>
<dbReference type="Gene3D" id="2.60.34.10">
    <property type="entry name" value="Substrate Binding Domain Of DNAk, Chain A, domain 1"/>
    <property type="match status" value="1"/>
</dbReference>
<dbReference type="HAMAP" id="MF_00679">
    <property type="entry name" value="HscA"/>
    <property type="match status" value="1"/>
</dbReference>
<dbReference type="InterPro" id="IPR043129">
    <property type="entry name" value="ATPase_NBD"/>
</dbReference>
<dbReference type="InterPro" id="IPR018181">
    <property type="entry name" value="Heat_shock_70_CS"/>
</dbReference>
<dbReference type="InterPro" id="IPR042039">
    <property type="entry name" value="HscA_NBD"/>
</dbReference>
<dbReference type="InterPro" id="IPR029048">
    <property type="entry name" value="HSP70_C_sf"/>
</dbReference>
<dbReference type="InterPro" id="IPR029047">
    <property type="entry name" value="HSP70_peptide-bd_sf"/>
</dbReference>
<dbReference type="InterPro" id="IPR013126">
    <property type="entry name" value="Hsp_70_fam"/>
</dbReference>
<dbReference type="InterPro" id="IPR010236">
    <property type="entry name" value="ISC_FeS_clus_asmbl_HscA"/>
</dbReference>
<dbReference type="NCBIfam" id="TIGR01991">
    <property type="entry name" value="HscA"/>
    <property type="match status" value="1"/>
</dbReference>
<dbReference type="NCBIfam" id="NF003520">
    <property type="entry name" value="PRK05183.1"/>
    <property type="match status" value="1"/>
</dbReference>
<dbReference type="PANTHER" id="PTHR19375">
    <property type="entry name" value="HEAT SHOCK PROTEIN 70KDA"/>
    <property type="match status" value="1"/>
</dbReference>
<dbReference type="Pfam" id="PF00012">
    <property type="entry name" value="HSP70"/>
    <property type="match status" value="1"/>
</dbReference>
<dbReference type="PRINTS" id="PR00301">
    <property type="entry name" value="HEATSHOCK70"/>
</dbReference>
<dbReference type="SUPFAM" id="SSF53067">
    <property type="entry name" value="Actin-like ATPase domain"/>
    <property type="match status" value="2"/>
</dbReference>
<dbReference type="SUPFAM" id="SSF100934">
    <property type="entry name" value="Heat shock protein 70kD (HSP70), C-terminal subdomain"/>
    <property type="match status" value="1"/>
</dbReference>
<dbReference type="SUPFAM" id="SSF100920">
    <property type="entry name" value="Heat shock protein 70kD (HSP70), peptide-binding domain"/>
    <property type="match status" value="1"/>
</dbReference>
<dbReference type="PROSITE" id="PS00297">
    <property type="entry name" value="HSP70_1"/>
    <property type="match status" value="1"/>
</dbReference>
<dbReference type="PROSITE" id="PS00329">
    <property type="entry name" value="HSP70_2"/>
    <property type="match status" value="1"/>
</dbReference>
<dbReference type="PROSITE" id="PS01036">
    <property type="entry name" value="HSP70_3"/>
    <property type="match status" value="1"/>
</dbReference>
<organism>
    <name type="scientific">Cupriavidus necator (strain ATCC 17699 / DSM 428 / KCTC 22496 / NCIMB 10442 / H16 / Stanier 337)</name>
    <name type="common">Ralstonia eutropha</name>
    <dbReference type="NCBI Taxonomy" id="381666"/>
    <lineage>
        <taxon>Bacteria</taxon>
        <taxon>Pseudomonadati</taxon>
        <taxon>Pseudomonadota</taxon>
        <taxon>Betaproteobacteria</taxon>
        <taxon>Burkholderiales</taxon>
        <taxon>Burkholderiaceae</taxon>
        <taxon>Cupriavidus</taxon>
    </lineage>
</organism>
<keyword id="KW-0067">ATP-binding</keyword>
<keyword id="KW-0143">Chaperone</keyword>
<keyword id="KW-0547">Nucleotide-binding</keyword>
<keyword id="KW-1185">Reference proteome</keyword>
<protein>
    <recommendedName>
        <fullName evidence="1">Chaperone protein HscA homolog</fullName>
    </recommendedName>
</protein>